<dbReference type="EC" id="2.8.1.13" evidence="1"/>
<dbReference type="EMBL" id="BX842651">
    <property type="protein sequence ID" value="CAE79790.1"/>
    <property type="status" value="ALT_INIT"/>
    <property type="molecule type" value="Genomic_DNA"/>
</dbReference>
<dbReference type="RefSeq" id="WP_144313823.1">
    <property type="nucleotide sequence ID" value="NC_005363.1"/>
</dbReference>
<dbReference type="SMR" id="Q6MLR7"/>
<dbReference type="STRING" id="264462.Bd1939"/>
<dbReference type="GeneID" id="93012894"/>
<dbReference type="KEGG" id="bba:Bd1939"/>
<dbReference type="eggNOG" id="COG0482">
    <property type="taxonomic scope" value="Bacteria"/>
</dbReference>
<dbReference type="HOGENOM" id="CLU_035188_0_0_7"/>
<dbReference type="Proteomes" id="UP000008080">
    <property type="component" value="Chromosome"/>
</dbReference>
<dbReference type="GO" id="GO:0005737">
    <property type="term" value="C:cytoplasm"/>
    <property type="evidence" value="ECO:0007669"/>
    <property type="project" value="UniProtKB-SubCell"/>
</dbReference>
<dbReference type="GO" id="GO:0005524">
    <property type="term" value="F:ATP binding"/>
    <property type="evidence" value="ECO:0007669"/>
    <property type="project" value="UniProtKB-KW"/>
</dbReference>
<dbReference type="GO" id="GO:0000049">
    <property type="term" value="F:tRNA binding"/>
    <property type="evidence" value="ECO:0007669"/>
    <property type="project" value="UniProtKB-KW"/>
</dbReference>
<dbReference type="GO" id="GO:0103016">
    <property type="term" value="F:tRNA-uridine 2-sulfurtransferase activity"/>
    <property type="evidence" value="ECO:0007669"/>
    <property type="project" value="UniProtKB-EC"/>
</dbReference>
<dbReference type="GO" id="GO:0002143">
    <property type="term" value="P:tRNA wobble position uridine thiolation"/>
    <property type="evidence" value="ECO:0007669"/>
    <property type="project" value="TreeGrafter"/>
</dbReference>
<dbReference type="CDD" id="cd01998">
    <property type="entry name" value="MnmA_TRMU-like"/>
    <property type="match status" value="1"/>
</dbReference>
<dbReference type="FunFam" id="3.40.50.620:FF:000115">
    <property type="entry name" value="tRNA-specific 2-thiouridylase MnmA"/>
    <property type="match status" value="1"/>
</dbReference>
<dbReference type="Gene3D" id="2.30.30.280">
    <property type="entry name" value="Adenine nucleotide alpha hydrolases-like domains"/>
    <property type="match status" value="1"/>
</dbReference>
<dbReference type="Gene3D" id="3.40.50.620">
    <property type="entry name" value="HUPs"/>
    <property type="match status" value="1"/>
</dbReference>
<dbReference type="Gene3D" id="2.40.30.10">
    <property type="entry name" value="Translation factors"/>
    <property type="match status" value="1"/>
</dbReference>
<dbReference type="HAMAP" id="MF_00144">
    <property type="entry name" value="tRNA_thiouridyl_MnmA"/>
    <property type="match status" value="1"/>
</dbReference>
<dbReference type="InterPro" id="IPR004506">
    <property type="entry name" value="MnmA-like"/>
</dbReference>
<dbReference type="InterPro" id="IPR046885">
    <property type="entry name" value="MnmA-like_C"/>
</dbReference>
<dbReference type="InterPro" id="IPR046884">
    <property type="entry name" value="MnmA-like_central"/>
</dbReference>
<dbReference type="InterPro" id="IPR023382">
    <property type="entry name" value="MnmA-like_central_sf"/>
</dbReference>
<dbReference type="InterPro" id="IPR014729">
    <property type="entry name" value="Rossmann-like_a/b/a_fold"/>
</dbReference>
<dbReference type="NCBIfam" id="NF001138">
    <property type="entry name" value="PRK00143.1"/>
    <property type="match status" value="1"/>
</dbReference>
<dbReference type="NCBIfam" id="TIGR00420">
    <property type="entry name" value="trmU"/>
    <property type="match status" value="1"/>
</dbReference>
<dbReference type="PANTHER" id="PTHR11933:SF5">
    <property type="entry name" value="MITOCHONDRIAL TRNA-SPECIFIC 2-THIOURIDYLASE 1"/>
    <property type="match status" value="1"/>
</dbReference>
<dbReference type="PANTHER" id="PTHR11933">
    <property type="entry name" value="TRNA 5-METHYLAMINOMETHYL-2-THIOURIDYLATE -METHYLTRANSFERASE"/>
    <property type="match status" value="1"/>
</dbReference>
<dbReference type="Pfam" id="PF03054">
    <property type="entry name" value="tRNA_Me_trans"/>
    <property type="match status" value="1"/>
</dbReference>
<dbReference type="Pfam" id="PF20258">
    <property type="entry name" value="tRNA_Me_trans_C"/>
    <property type="match status" value="1"/>
</dbReference>
<dbReference type="Pfam" id="PF20259">
    <property type="entry name" value="tRNA_Me_trans_M"/>
    <property type="match status" value="1"/>
</dbReference>
<dbReference type="SUPFAM" id="SSF52402">
    <property type="entry name" value="Adenine nucleotide alpha hydrolases-like"/>
    <property type="match status" value="1"/>
</dbReference>
<feature type="chain" id="PRO_0000349536" description="tRNA-specific 2-thiouridylase MnmA">
    <location>
        <begin position="1"/>
        <end position="360"/>
    </location>
</feature>
<feature type="region of interest" description="Interaction with tRNA" evidence="1">
    <location>
        <begin position="152"/>
        <end position="154"/>
    </location>
</feature>
<feature type="region of interest" description="Interaction with tRNA" evidence="1">
    <location>
        <begin position="310"/>
        <end position="311"/>
    </location>
</feature>
<feature type="active site" description="Nucleophile" evidence="1">
    <location>
        <position position="105"/>
    </location>
</feature>
<feature type="active site" description="Cysteine persulfide intermediate" evidence="1">
    <location>
        <position position="202"/>
    </location>
</feature>
<feature type="binding site" evidence="1">
    <location>
        <begin position="9"/>
        <end position="16"/>
    </location>
    <ligand>
        <name>ATP</name>
        <dbReference type="ChEBI" id="CHEBI:30616"/>
    </ligand>
</feature>
<feature type="binding site" evidence="1">
    <location>
        <position position="35"/>
    </location>
    <ligand>
        <name>ATP</name>
        <dbReference type="ChEBI" id="CHEBI:30616"/>
    </ligand>
</feature>
<feature type="binding site" evidence="1">
    <location>
        <position position="129"/>
    </location>
    <ligand>
        <name>ATP</name>
        <dbReference type="ChEBI" id="CHEBI:30616"/>
    </ligand>
</feature>
<feature type="site" description="Interaction with tRNA" evidence="1">
    <location>
        <position position="130"/>
    </location>
</feature>
<feature type="site" description="Interaction with tRNA" evidence="1">
    <location>
        <position position="342"/>
    </location>
</feature>
<feature type="disulfide bond" description="Alternate" evidence="1">
    <location>
        <begin position="105"/>
        <end position="202"/>
    </location>
</feature>
<comment type="function">
    <text evidence="1">Catalyzes the 2-thiolation of uridine at the wobble position (U34) of tRNA, leading to the formation of s(2)U34.</text>
</comment>
<comment type="catalytic activity">
    <reaction evidence="1">
        <text>S-sulfanyl-L-cysteinyl-[protein] + uridine(34) in tRNA + AH2 + ATP = 2-thiouridine(34) in tRNA + L-cysteinyl-[protein] + A + AMP + diphosphate + H(+)</text>
        <dbReference type="Rhea" id="RHEA:47032"/>
        <dbReference type="Rhea" id="RHEA-COMP:10131"/>
        <dbReference type="Rhea" id="RHEA-COMP:11726"/>
        <dbReference type="Rhea" id="RHEA-COMP:11727"/>
        <dbReference type="Rhea" id="RHEA-COMP:11728"/>
        <dbReference type="ChEBI" id="CHEBI:13193"/>
        <dbReference type="ChEBI" id="CHEBI:15378"/>
        <dbReference type="ChEBI" id="CHEBI:17499"/>
        <dbReference type="ChEBI" id="CHEBI:29950"/>
        <dbReference type="ChEBI" id="CHEBI:30616"/>
        <dbReference type="ChEBI" id="CHEBI:33019"/>
        <dbReference type="ChEBI" id="CHEBI:61963"/>
        <dbReference type="ChEBI" id="CHEBI:65315"/>
        <dbReference type="ChEBI" id="CHEBI:87170"/>
        <dbReference type="ChEBI" id="CHEBI:456215"/>
        <dbReference type="EC" id="2.8.1.13"/>
    </reaction>
</comment>
<comment type="subcellular location">
    <subcellularLocation>
        <location evidence="1">Cytoplasm</location>
    </subcellularLocation>
</comment>
<comment type="similarity">
    <text evidence="1">Belongs to the MnmA/TRMU family.</text>
</comment>
<comment type="sequence caution" evidence="2">
    <conflict type="erroneous initiation">
        <sequence resource="EMBL-CDS" id="CAE79790"/>
    </conflict>
</comment>
<sequence>MSKGRVLVAMSGGVDSSAAAALLVEQGYEVIGATMQVWDYSTCDIEEGNGTCCSSIDVDDARAVADRLGIPFYVINCEAKFRAAVIDPFLKAYLEGQTPLPCVNCNTYLKFDHLVKKMRELECDYIATGHYAKIVYDDKGKASIHTSTDDWKDQTYFLFTIDPELVPKLLFPVGDMKKPQVREYSESRGLVTARKKDSQGICFVGNQGYQNFIKDHVKSEILASKKGLIKRFPEGQVMASHEGIHNYTYGQSKGLGMDYHEKLFVIKIDASDNTVWVGEEKHLFANEVDVVDPKLLDEIQDGEIMNVKIRYQHKGAPAQVIKTASGFKLKFTEPQRAVTPGQAAVFYRDRQLVGGGWITL</sequence>
<proteinExistence type="inferred from homology"/>
<gene>
    <name evidence="1" type="primary">mnmA</name>
    <name type="ordered locus">Bd1939</name>
</gene>
<evidence type="ECO:0000255" key="1">
    <source>
        <dbReference type="HAMAP-Rule" id="MF_00144"/>
    </source>
</evidence>
<evidence type="ECO:0000305" key="2"/>
<reference key="1">
    <citation type="journal article" date="2004" name="Science">
        <title>A predator unmasked: life cycle of Bdellovibrio bacteriovorus from a genomic perspective.</title>
        <authorList>
            <person name="Rendulic S."/>
            <person name="Jagtap P."/>
            <person name="Rosinus A."/>
            <person name="Eppinger M."/>
            <person name="Baar C."/>
            <person name="Lanz C."/>
            <person name="Keller H."/>
            <person name="Lambert C."/>
            <person name="Evans K.J."/>
            <person name="Goesmann A."/>
            <person name="Meyer F."/>
            <person name="Sockett R.E."/>
            <person name="Schuster S.C."/>
        </authorList>
    </citation>
    <scope>NUCLEOTIDE SEQUENCE [LARGE SCALE GENOMIC DNA]</scope>
    <source>
        <strain>ATCC 15356 / DSM 50701 / NCIMB 9529 / HD100</strain>
    </source>
</reference>
<name>MNMA_BDEBA</name>
<organism>
    <name type="scientific">Bdellovibrio bacteriovorus (strain ATCC 15356 / DSM 50701 / NCIMB 9529 / HD100)</name>
    <dbReference type="NCBI Taxonomy" id="264462"/>
    <lineage>
        <taxon>Bacteria</taxon>
        <taxon>Pseudomonadati</taxon>
        <taxon>Bdellovibrionota</taxon>
        <taxon>Bdellovibrionia</taxon>
        <taxon>Bdellovibrionales</taxon>
        <taxon>Pseudobdellovibrionaceae</taxon>
        <taxon>Bdellovibrio</taxon>
    </lineage>
</organism>
<accession>Q6MLR7</accession>
<keyword id="KW-0067">ATP-binding</keyword>
<keyword id="KW-0963">Cytoplasm</keyword>
<keyword id="KW-1015">Disulfide bond</keyword>
<keyword id="KW-0547">Nucleotide-binding</keyword>
<keyword id="KW-1185">Reference proteome</keyword>
<keyword id="KW-0694">RNA-binding</keyword>
<keyword id="KW-0808">Transferase</keyword>
<keyword id="KW-0819">tRNA processing</keyword>
<keyword id="KW-0820">tRNA-binding</keyword>
<protein>
    <recommendedName>
        <fullName evidence="1">tRNA-specific 2-thiouridylase MnmA</fullName>
        <ecNumber evidence="1">2.8.1.13</ecNumber>
    </recommendedName>
</protein>